<proteinExistence type="inferred from homology"/>
<protein>
    <recommendedName>
        <fullName>Peptidyl-prolyl isomerase CWC27</fullName>
        <shortName>PPIase CWC27</shortName>
        <ecNumber>5.2.1.8</ecNumber>
    </recommendedName>
    <alternativeName>
        <fullName>Rotamase CWC27</fullName>
    </alternativeName>
</protein>
<organism>
    <name type="scientific">Cryptococcus neoformans var. neoformans serotype D (strain JEC21 / ATCC MYA-565)</name>
    <name type="common">Filobasidiella neoformans</name>
    <dbReference type="NCBI Taxonomy" id="214684"/>
    <lineage>
        <taxon>Eukaryota</taxon>
        <taxon>Fungi</taxon>
        <taxon>Dikarya</taxon>
        <taxon>Basidiomycota</taxon>
        <taxon>Agaricomycotina</taxon>
        <taxon>Tremellomycetes</taxon>
        <taxon>Tremellales</taxon>
        <taxon>Cryptococcaceae</taxon>
        <taxon>Cryptococcus</taxon>
        <taxon>Cryptococcus neoformans species complex</taxon>
    </lineage>
</organism>
<evidence type="ECO:0000250" key="1"/>
<evidence type="ECO:0000255" key="2"/>
<evidence type="ECO:0000255" key="3">
    <source>
        <dbReference type="PROSITE-ProRule" id="PRU00156"/>
    </source>
</evidence>
<evidence type="ECO:0000256" key="4">
    <source>
        <dbReference type="SAM" id="MobiDB-lite"/>
    </source>
</evidence>
<evidence type="ECO:0000305" key="5"/>
<accession>P0CP92</accession>
<accession>Q55L68</accession>
<accession>Q5KAB3</accession>
<keyword id="KW-0175">Coiled coil</keyword>
<keyword id="KW-0963">Cytoplasm</keyword>
<keyword id="KW-0413">Isomerase</keyword>
<keyword id="KW-0507">mRNA processing</keyword>
<keyword id="KW-0508">mRNA splicing</keyword>
<keyword id="KW-0539">Nucleus</keyword>
<keyword id="KW-1185">Reference proteome</keyword>
<keyword id="KW-0697">Rotamase</keyword>
<keyword id="KW-0747">Spliceosome</keyword>
<dbReference type="EC" id="5.2.1.8"/>
<dbReference type="EMBL" id="AE017350">
    <property type="protein sequence ID" value="AAW45928.1"/>
    <property type="molecule type" value="Genomic_DNA"/>
</dbReference>
<dbReference type="RefSeq" id="XP_567445.1">
    <property type="nucleotide sequence ID" value="XM_567445.1"/>
</dbReference>
<dbReference type="SMR" id="P0CP92"/>
<dbReference type="FunCoup" id="P0CP92">
    <property type="interactions" value="316"/>
</dbReference>
<dbReference type="STRING" id="214684.P0CP92"/>
<dbReference type="PaxDb" id="214684-P0CP92"/>
<dbReference type="EnsemblFungi" id="AAW45928">
    <property type="protein sequence ID" value="AAW45928"/>
    <property type="gene ID" value="CNJ02320"/>
</dbReference>
<dbReference type="GeneID" id="3254127"/>
<dbReference type="KEGG" id="cne:CNJ02320"/>
<dbReference type="VEuPathDB" id="FungiDB:CNJ02320"/>
<dbReference type="eggNOG" id="KOG0885">
    <property type="taxonomic scope" value="Eukaryota"/>
</dbReference>
<dbReference type="HOGENOM" id="CLU_012062_14_4_1"/>
<dbReference type="InParanoid" id="P0CP92"/>
<dbReference type="OMA" id="DDWYDVY"/>
<dbReference type="OrthoDB" id="442970at2759"/>
<dbReference type="Proteomes" id="UP000002149">
    <property type="component" value="Chromosome 10"/>
</dbReference>
<dbReference type="GO" id="GO:0071013">
    <property type="term" value="C:catalytic step 2 spliceosome"/>
    <property type="evidence" value="ECO:0000318"/>
    <property type="project" value="GO_Central"/>
</dbReference>
<dbReference type="GO" id="GO:0005737">
    <property type="term" value="C:cytoplasm"/>
    <property type="evidence" value="ECO:0007669"/>
    <property type="project" value="UniProtKB-SubCell"/>
</dbReference>
<dbReference type="GO" id="GO:0003755">
    <property type="term" value="F:peptidyl-prolyl cis-trans isomerase activity"/>
    <property type="evidence" value="ECO:0007669"/>
    <property type="project" value="UniProtKB-KW"/>
</dbReference>
<dbReference type="GO" id="GO:0006397">
    <property type="term" value="P:mRNA processing"/>
    <property type="evidence" value="ECO:0007669"/>
    <property type="project" value="UniProtKB-KW"/>
</dbReference>
<dbReference type="GO" id="GO:0006457">
    <property type="term" value="P:protein folding"/>
    <property type="evidence" value="ECO:0000318"/>
    <property type="project" value="GO_Central"/>
</dbReference>
<dbReference type="GO" id="GO:0008380">
    <property type="term" value="P:RNA splicing"/>
    <property type="evidence" value="ECO:0007669"/>
    <property type="project" value="UniProtKB-KW"/>
</dbReference>
<dbReference type="CDD" id="cd01925">
    <property type="entry name" value="cyclophilin_CeCYP16-like"/>
    <property type="match status" value="1"/>
</dbReference>
<dbReference type="FunFam" id="2.40.100.10:FF:000007">
    <property type="entry name" value="Peptidyl-prolyl cis-trans isomerase CWC27 homolog"/>
    <property type="match status" value="1"/>
</dbReference>
<dbReference type="Gene3D" id="2.40.100.10">
    <property type="entry name" value="Cyclophilin-like"/>
    <property type="match status" value="1"/>
</dbReference>
<dbReference type="InterPro" id="IPR029000">
    <property type="entry name" value="Cyclophilin-like_dom_sf"/>
</dbReference>
<dbReference type="InterPro" id="IPR002130">
    <property type="entry name" value="Cyclophilin-type_PPIase_dom"/>
</dbReference>
<dbReference type="InterPro" id="IPR044666">
    <property type="entry name" value="Cyclophilin_A-like"/>
</dbReference>
<dbReference type="PANTHER" id="PTHR45625">
    <property type="entry name" value="PEPTIDYL-PROLYL CIS-TRANS ISOMERASE-RELATED"/>
    <property type="match status" value="1"/>
</dbReference>
<dbReference type="PANTHER" id="PTHR45625:SF6">
    <property type="entry name" value="SPLICEOSOME-ASSOCIATED PROTEIN CWC27 HOMOLOG"/>
    <property type="match status" value="1"/>
</dbReference>
<dbReference type="Pfam" id="PF00160">
    <property type="entry name" value="Pro_isomerase"/>
    <property type="match status" value="1"/>
</dbReference>
<dbReference type="PRINTS" id="PR00153">
    <property type="entry name" value="CSAPPISMRASE"/>
</dbReference>
<dbReference type="SUPFAM" id="SSF50891">
    <property type="entry name" value="Cyclophilin-like"/>
    <property type="match status" value="1"/>
</dbReference>
<dbReference type="PROSITE" id="PS50072">
    <property type="entry name" value="CSA_PPIASE_2"/>
    <property type="match status" value="1"/>
</dbReference>
<feature type="chain" id="PRO_0000064182" description="Peptidyl-prolyl isomerase CWC27">
    <location>
        <begin position="1"/>
        <end position="491"/>
    </location>
</feature>
<feature type="domain" description="PPIase cyclophilin-type" evidence="3">
    <location>
        <begin position="11"/>
        <end position="167"/>
    </location>
</feature>
<feature type="region of interest" description="Disordered" evidence="4">
    <location>
        <begin position="186"/>
        <end position="427"/>
    </location>
</feature>
<feature type="region of interest" description="Disordered" evidence="4">
    <location>
        <begin position="464"/>
        <end position="491"/>
    </location>
</feature>
<feature type="coiled-coil region" evidence="2">
    <location>
        <begin position="277"/>
        <end position="327"/>
    </location>
</feature>
<feature type="compositionally biased region" description="Basic and acidic residues" evidence="4">
    <location>
        <begin position="186"/>
        <end position="202"/>
    </location>
</feature>
<feature type="compositionally biased region" description="Basic and acidic residues" evidence="4">
    <location>
        <begin position="268"/>
        <end position="298"/>
    </location>
</feature>
<feature type="compositionally biased region" description="Basic and acidic residues" evidence="4">
    <location>
        <begin position="306"/>
        <end position="316"/>
    </location>
</feature>
<feature type="compositionally biased region" description="Low complexity" evidence="4">
    <location>
        <begin position="323"/>
        <end position="333"/>
    </location>
</feature>
<feature type="compositionally biased region" description="Basic residues" evidence="4">
    <location>
        <begin position="352"/>
        <end position="367"/>
    </location>
</feature>
<feature type="compositionally biased region" description="Acidic residues" evidence="4">
    <location>
        <begin position="391"/>
        <end position="406"/>
    </location>
</feature>
<feature type="compositionally biased region" description="Acidic residues" evidence="4">
    <location>
        <begin position="418"/>
        <end position="427"/>
    </location>
</feature>
<feature type="compositionally biased region" description="Basic residues" evidence="4">
    <location>
        <begin position="482"/>
        <end position="491"/>
    </location>
</feature>
<sequence length="491" mass="55194">MSNLYATEPATNGKVIIDTTAGEIEVELWGKECPKAVRNFLALTMEGYYDGVIFHRVVPGFIIQSGDPTGTGMGGESFYGEPFEDEIHGRLKFNRRGLLGMANNGSRNSNTSQFFITLDAAPELTNKHTMFGKIVGNTIFNVLNIGNLDTDKEERPLIPPKIRRIHIIENPFDDIVPRITAEEKKAQQKAKLEAKKDMEQRERRAKAKKNTGLLSFGDSEEIPEEEVTVKKKSMTRQDLVDPSEAEHTKSKTSKMTETFVNIPPSLKDLGKSRENEASEEKKAVDLKNIRAQHEREKAGGSAARQAEIKRMEEDLRRLKKRSGSVSDSESDSSSRARRKGPSYLEQELAKYASKRGRAAMKAGNKRGRRDEEEDVLTEMRKFSKRVMQAGDEPEEEQAEEIEEGEAKEEGTGIGAAMAEEEGGIEVDDDVGWLTHKLKFQVDDKELTRRAEDEYAVIDPRAKARDLLGKPDKKKLKGNPNRRTVRNSGRNR</sequence>
<reference key="1">
    <citation type="journal article" date="2005" name="Science">
        <title>The genome of the basidiomycetous yeast and human pathogen Cryptococcus neoformans.</title>
        <authorList>
            <person name="Loftus B.J."/>
            <person name="Fung E."/>
            <person name="Roncaglia P."/>
            <person name="Rowley D."/>
            <person name="Amedeo P."/>
            <person name="Bruno D."/>
            <person name="Vamathevan J."/>
            <person name="Miranda M."/>
            <person name="Anderson I.J."/>
            <person name="Fraser J.A."/>
            <person name="Allen J.E."/>
            <person name="Bosdet I.E."/>
            <person name="Brent M.R."/>
            <person name="Chiu R."/>
            <person name="Doering T.L."/>
            <person name="Donlin M.J."/>
            <person name="D'Souza C.A."/>
            <person name="Fox D.S."/>
            <person name="Grinberg V."/>
            <person name="Fu J."/>
            <person name="Fukushima M."/>
            <person name="Haas B.J."/>
            <person name="Huang J.C."/>
            <person name="Janbon G."/>
            <person name="Jones S.J.M."/>
            <person name="Koo H.L."/>
            <person name="Krzywinski M.I."/>
            <person name="Kwon-Chung K.J."/>
            <person name="Lengeler K.B."/>
            <person name="Maiti R."/>
            <person name="Marra M.A."/>
            <person name="Marra R.E."/>
            <person name="Mathewson C.A."/>
            <person name="Mitchell T.G."/>
            <person name="Pertea M."/>
            <person name="Riggs F.R."/>
            <person name="Salzberg S.L."/>
            <person name="Schein J.E."/>
            <person name="Shvartsbeyn A."/>
            <person name="Shin H."/>
            <person name="Shumway M."/>
            <person name="Specht C.A."/>
            <person name="Suh B.B."/>
            <person name="Tenney A."/>
            <person name="Utterback T.R."/>
            <person name="Wickes B.L."/>
            <person name="Wortman J.R."/>
            <person name="Wye N.H."/>
            <person name="Kronstad J.W."/>
            <person name="Lodge J.K."/>
            <person name="Heitman J."/>
            <person name="Davis R.W."/>
            <person name="Fraser C.M."/>
            <person name="Hyman R.W."/>
        </authorList>
    </citation>
    <scope>NUCLEOTIDE SEQUENCE [LARGE SCALE GENOMIC DNA]</scope>
    <source>
        <strain>JEC21 / ATCC MYA-565</strain>
    </source>
</reference>
<name>CWC27_CRYNJ</name>
<comment type="function">
    <text evidence="1">PPIases accelerate the folding of proteins. It catalyzes the cis-trans isomerization of proline imidic peptide bonds in oligopeptides. Involved in pre-mRNA splicing (By similarity).</text>
</comment>
<comment type="catalytic activity">
    <reaction>
        <text>[protein]-peptidylproline (omega=180) = [protein]-peptidylproline (omega=0)</text>
        <dbReference type="Rhea" id="RHEA:16237"/>
        <dbReference type="Rhea" id="RHEA-COMP:10747"/>
        <dbReference type="Rhea" id="RHEA-COMP:10748"/>
        <dbReference type="ChEBI" id="CHEBI:83833"/>
        <dbReference type="ChEBI" id="CHEBI:83834"/>
        <dbReference type="EC" id="5.2.1.8"/>
    </reaction>
</comment>
<comment type="subunit">
    <text evidence="1">Associated with the spliceosome.</text>
</comment>
<comment type="subcellular location">
    <subcellularLocation>
        <location evidence="1">Cytoplasm</location>
    </subcellularLocation>
    <subcellularLocation>
        <location evidence="1">Nucleus</location>
    </subcellularLocation>
</comment>
<comment type="similarity">
    <text evidence="5">Belongs to the cyclophilin-type PPIase family. CWC27 subfamily.</text>
</comment>
<gene>
    <name type="primary">CWC27</name>
    <name type="ordered locus">CNJ02320</name>
</gene>